<comment type="function">
    <text evidence="1">Methylates ribosomal protein L11.</text>
</comment>
<comment type="catalytic activity">
    <reaction evidence="1">
        <text>L-lysyl-[protein] + 3 S-adenosyl-L-methionine = N(6),N(6),N(6)-trimethyl-L-lysyl-[protein] + 3 S-adenosyl-L-homocysteine + 3 H(+)</text>
        <dbReference type="Rhea" id="RHEA:54192"/>
        <dbReference type="Rhea" id="RHEA-COMP:9752"/>
        <dbReference type="Rhea" id="RHEA-COMP:13826"/>
        <dbReference type="ChEBI" id="CHEBI:15378"/>
        <dbReference type="ChEBI" id="CHEBI:29969"/>
        <dbReference type="ChEBI" id="CHEBI:57856"/>
        <dbReference type="ChEBI" id="CHEBI:59789"/>
        <dbReference type="ChEBI" id="CHEBI:61961"/>
    </reaction>
</comment>
<comment type="subcellular location">
    <subcellularLocation>
        <location evidence="1">Cytoplasm</location>
    </subcellularLocation>
</comment>
<comment type="similarity">
    <text evidence="1">Belongs to the methyltransferase superfamily. PrmA family.</text>
</comment>
<evidence type="ECO:0000255" key="1">
    <source>
        <dbReference type="HAMAP-Rule" id="MF_00735"/>
    </source>
</evidence>
<organism>
    <name type="scientific">Leptospira interrogans serogroup Icterohaemorrhagiae serovar copenhageni (strain Fiocruz L1-130)</name>
    <dbReference type="NCBI Taxonomy" id="267671"/>
    <lineage>
        <taxon>Bacteria</taxon>
        <taxon>Pseudomonadati</taxon>
        <taxon>Spirochaetota</taxon>
        <taxon>Spirochaetia</taxon>
        <taxon>Leptospirales</taxon>
        <taxon>Leptospiraceae</taxon>
        <taxon>Leptospira</taxon>
    </lineage>
</organism>
<name>PRMA_LEPIC</name>
<accession>Q72PX0</accession>
<dbReference type="EC" id="2.1.1.-" evidence="1"/>
<dbReference type="EMBL" id="AE016823">
    <property type="protein sequence ID" value="AAS70916.1"/>
    <property type="molecule type" value="Genomic_DNA"/>
</dbReference>
<dbReference type="RefSeq" id="WP_001270455.1">
    <property type="nucleotide sequence ID" value="NC_005823.1"/>
</dbReference>
<dbReference type="SMR" id="Q72PX0"/>
<dbReference type="KEGG" id="lic:LIC_12347"/>
<dbReference type="HOGENOM" id="CLU_049382_0_2_12"/>
<dbReference type="Proteomes" id="UP000007037">
    <property type="component" value="Chromosome I"/>
</dbReference>
<dbReference type="GO" id="GO:0005737">
    <property type="term" value="C:cytoplasm"/>
    <property type="evidence" value="ECO:0007669"/>
    <property type="project" value="UniProtKB-SubCell"/>
</dbReference>
<dbReference type="GO" id="GO:0016279">
    <property type="term" value="F:protein-lysine N-methyltransferase activity"/>
    <property type="evidence" value="ECO:0007669"/>
    <property type="project" value="RHEA"/>
</dbReference>
<dbReference type="GO" id="GO:0032259">
    <property type="term" value="P:methylation"/>
    <property type="evidence" value="ECO:0007669"/>
    <property type="project" value="UniProtKB-KW"/>
</dbReference>
<dbReference type="CDD" id="cd02440">
    <property type="entry name" value="AdoMet_MTases"/>
    <property type="match status" value="1"/>
</dbReference>
<dbReference type="Gene3D" id="3.40.50.150">
    <property type="entry name" value="Vaccinia Virus protein VP39"/>
    <property type="match status" value="1"/>
</dbReference>
<dbReference type="HAMAP" id="MF_00735">
    <property type="entry name" value="Methyltr_PrmA"/>
    <property type="match status" value="1"/>
</dbReference>
<dbReference type="InterPro" id="IPR050078">
    <property type="entry name" value="Ribosomal_L11_MeTrfase_PrmA"/>
</dbReference>
<dbReference type="InterPro" id="IPR004498">
    <property type="entry name" value="Ribosomal_PrmA_MeTrfase"/>
</dbReference>
<dbReference type="InterPro" id="IPR029063">
    <property type="entry name" value="SAM-dependent_MTases_sf"/>
</dbReference>
<dbReference type="PANTHER" id="PTHR43648">
    <property type="entry name" value="ELECTRON TRANSFER FLAVOPROTEIN BETA SUBUNIT LYSINE METHYLTRANSFERASE"/>
    <property type="match status" value="1"/>
</dbReference>
<dbReference type="PANTHER" id="PTHR43648:SF1">
    <property type="entry name" value="ELECTRON TRANSFER FLAVOPROTEIN BETA SUBUNIT LYSINE METHYLTRANSFERASE"/>
    <property type="match status" value="1"/>
</dbReference>
<dbReference type="Pfam" id="PF06325">
    <property type="entry name" value="PrmA"/>
    <property type="match status" value="1"/>
</dbReference>
<dbReference type="PIRSF" id="PIRSF000401">
    <property type="entry name" value="RPL11_MTase"/>
    <property type="match status" value="1"/>
</dbReference>
<dbReference type="SUPFAM" id="SSF53335">
    <property type="entry name" value="S-adenosyl-L-methionine-dependent methyltransferases"/>
    <property type="match status" value="1"/>
</dbReference>
<proteinExistence type="inferred from homology"/>
<reference key="1">
    <citation type="journal article" date="2004" name="J. Bacteriol.">
        <title>Comparative genomics of two Leptospira interrogans serovars reveals novel insights into physiology and pathogenesis.</title>
        <authorList>
            <person name="Nascimento A.L.T.O."/>
            <person name="Ko A.I."/>
            <person name="Martins E.A.L."/>
            <person name="Monteiro-Vitorello C.B."/>
            <person name="Ho P.L."/>
            <person name="Haake D.A."/>
            <person name="Verjovski-Almeida S."/>
            <person name="Hartskeerl R.A."/>
            <person name="Marques M.V."/>
            <person name="Oliveira M.C."/>
            <person name="Menck C.F.M."/>
            <person name="Leite L.C.C."/>
            <person name="Carrer H."/>
            <person name="Coutinho L.L."/>
            <person name="Degrave W.M."/>
            <person name="Dellagostin O.A."/>
            <person name="El-Dorry H."/>
            <person name="Ferro E.S."/>
            <person name="Ferro M.I.T."/>
            <person name="Furlan L.R."/>
            <person name="Gamberini M."/>
            <person name="Giglioti E.A."/>
            <person name="Goes-Neto A."/>
            <person name="Goldman G.H."/>
            <person name="Goldman M.H.S."/>
            <person name="Harakava R."/>
            <person name="Jeronimo S.M.B."/>
            <person name="Junqueira-de-Azevedo I.L.M."/>
            <person name="Kimura E.T."/>
            <person name="Kuramae E.E."/>
            <person name="Lemos E.G.M."/>
            <person name="Lemos M.V.F."/>
            <person name="Marino C.L."/>
            <person name="Nunes L.R."/>
            <person name="de Oliveira R.C."/>
            <person name="Pereira G.G."/>
            <person name="Reis M.S."/>
            <person name="Schriefer A."/>
            <person name="Siqueira W.J."/>
            <person name="Sommer P."/>
            <person name="Tsai S.M."/>
            <person name="Simpson A.J.G."/>
            <person name="Ferro J.A."/>
            <person name="Camargo L.E.A."/>
            <person name="Kitajima J.P."/>
            <person name="Setubal J.C."/>
            <person name="Van Sluys M.A."/>
        </authorList>
    </citation>
    <scope>NUCLEOTIDE SEQUENCE [LARGE SCALE GENOMIC DNA]</scope>
    <source>
        <strain>Fiocruz L1-130</strain>
    </source>
</reference>
<sequence length="300" mass="33887">MRYREIILSIPKEIAENFTSFLDEVGVVGYYEILFDREVPRAPDEEIISDDTKFRVYLAEEDKENETKILIFLKATAGESFFLESRWIETKEYEEAYKEFYKPFIIGSYRVIPTWEKDTALGTTPEGIFPLLVNPGLAFGTGHHETTRLVLGRMGDLNLSAKRIADVGTGSGILSLAAAKSGASLILAIDVDPNSVRSASFNRDENEISSEVLVVEEGGFDHKKIQEQTWDLLIANITFAVLKANIQKIASIKTDHFLFSGVITERKEEFLELLKNTVGGEGVFFREDTGWELIEWKRKG</sequence>
<gene>
    <name evidence="1" type="primary">prmA</name>
    <name type="ordered locus">LIC_12347</name>
</gene>
<protein>
    <recommendedName>
        <fullName evidence="1">Ribosomal protein L11 methyltransferase</fullName>
        <shortName evidence="1">L11 Mtase</shortName>
        <ecNumber evidence="1">2.1.1.-</ecNumber>
    </recommendedName>
</protein>
<feature type="chain" id="PRO_0000192275" description="Ribosomal protein L11 methyltransferase">
    <location>
        <begin position="1"/>
        <end position="300"/>
    </location>
</feature>
<feature type="binding site" evidence="1">
    <location>
        <position position="147"/>
    </location>
    <ligand>
        <name>S-adenosyl-L-methionine</name>
        <dbReference type="ChEBI" id="CHEBI:59789"/>
    </ligand>
</feature>
<feature type="binding site" evidence="1">
    <location>
        <position position="168"/>
    </location>
    <ligand>
        <name>S-adenosyl-L-methionine</name>
        <dbReference type="ChEBI" id="CHEBI:59789"/>
    </ligand>
</feature>
<feature type="binding site" evidence="1">
    <location>
        <position position="190"/>
    </location>
    <ligand>
        <name>S-adenosyl-L-methionine</name>
        <dbReference type="ChEBI" id="CHEBI:59789"/>
    </ligand>
</feature>
<feature type="binding site" evidence="1">
    <location>
        <position position="236"/>
    </location>
    <ligand>
        <name>S-adenosyl-L-methionine</name>
        <dbReference type="ChEBI" id="CHEBI:59789"/>
    </ligand>
</feature>
<keyword id="KW-0963">Cytoplasm</keyword>
<keyword id="KW-0489">Methyltransferase</keyword>
<keyword id="KW-0949">S-adenosyl-L-methionine</keyword>
<keyword id="KW-0808">Transferase</keyword>